<organism>
    <name type="scientific">African swine fever virus (isolate Pig/Kenya/KEN-50/1950)</name>
    <name type="common">ASFV</name>
    <dbReference type="NCBI Taxonomy" id="561445"/>
    <lineage>
        <taxon>Viruses</taxon>
        <taxon>Varidnaviria</taxon>
        <taxon>Bamfordvirae</taxon>
        <taxon>Nucleocytoviricota</taxon>
        <taxon>Pokkesviricetes</taxon>
        <taxon>Asfuvirales</taxon>
        <taxon>Asfarviridae</taxon>
        <taxon>Asfivirus</taxon>
        <taxon>African swine fever virus</taxon>
    </lineage>
</organism>
<dbReference type="EMBL" id="AY261360">
    <property type="status" value="NOT_ANNOTATED_CDS"/>
    <property type="molecule type" value="Genomic_DNA"/>
</dbReference>
<dbReference type="SMR" id="P0CA16"/>
<dbReference type="Proteomes" id="UP000000861">
    <property type="component" value="Segment"/>
</dbReference>
<evidence type="ECO:0000305" key="1"/>
<organismHost>
    <name type="scientific">Ornithodoros</name>
    <name type="common">relapsing fever ticks</name>
    <dbReference type="NCBI Taxonomy" id="6937"/>
</organismHost>
<organismHost>
    <name type="scientific">Phacochoerus aethiopicus</name>
    <name type="common">Warthog</name>
    <dbReference type="NCBI Taxonomy" id="85517"/>
</organismHost>
<organismHost>
    <name type="scientific">Phacochoerus africanus</name>
    <name type="common">Warthog</name>
    <dbReference type="NCBI Taxonomy" id="41426"/>
</organismHost>
<organismHost>
    <name type="scientific">Potamochoerus larvatus</name>
    <name type="common">Bushpig</name>
    <dbReference type="NCBI Taxonomy" id="273792"/>
</organismHost>
<organismHost>
    <name type="scientific">Sus scrofa</name>
    <name type="common">Pig</name>
    <dbReference type="NCBI Taxonomy" id="9823"/>
</organismHost>
<name>VF111_ASFK5</name>
<gene>
    <name type="ordered locus">Ken-147</name>
</gene>
<feature type="chain" id="PRO_0000373476" description="Uncharacterized protein E111R">
    <location>
        <begin position="1"/>
        <end position="111"/>
    </location>
</feature>
<accession>P0CA16</accession>
<protein>
    <recommendedName>
        <fullName>Uncharacterized protein E111R</fullName>
        <shortName>pE111R</shortName>
    </recommendedName>
</protein>
<reference key="1">
    <citation type="submission" date="2003-03" db="EMBL/GenBank/DDBJ databases">
        <title>African swine fever virus genomes.</title>
        <authorList>
            <person name="Kutish G.F."/>
            <person name="Rock D.L."/>
        </authorList>
    </citation>
    <scope>NUCLEOTIDE SEQUENCE [LARGE SCALE GENOMIC DNA]</scope>
</reference>
<sequence length="111" mass="12988">MNFSECPLVISACKKFLQKRITIENEALINALITALAQTTTLNELCLLPIQTYLLSYKNAFEWIHFVCIAITTILDNKYNWKDCTVDINYIFLHVTYIYTIKTKEYLDYCS</sequence>
<comment type="similarity">
    <text evidence="1">Belongs to the asfivirus E111R family.</text>
</comment>
<proteinExistence type="inferred from homology"/>